<protein>
    <recommendedName>
        <fullName evidence="1">ATP synthase subunit c</fullName>
    </recommendedName>
    <alternativeName>
        <fullName evidence="1">ATP synthase F(0) sector subunit c</fullName>
    </alternativeName>
    <alternativeName>
        <fullName evidence="1">F-type ATPase subunit c</fullName>
        <shortName evidence="1">F-ATPase subunit c</shortName>
    </alternativeName>
    <alternativeName>
        <fullName evidence="1">Lipid-binding protein</fullName>
    </alternativeName>
</protein>
<proteinExistence type="inferred from homology"/>
<accession>C0Q2N7</accession>
<sequence length="79" mass="8256">MENLNMDLLYMAAAVMMGLAAIGAAIGIGILGGKFLEGAARQPDLIPLLRTQFFIVMGLVDAIPMIAVGLGLYVMFAVA</sequence>
<gene>
    <name evidence="1" type="primary">atpE</name>
    <name type="ordered locus">SPC_3955</name>
</gene>
<dbReference type="EMBL" id="CP000857">
    <property type="protein sequence ID" value="ACN48023.1"/>
    <property type="molecule type" value="Genomic_DNA"/>
</dbReference>
<dbReference type="RefSeq" id="WP_000429386.1">
    <property type="nucleotide sequence ID" value="NC_012125.1"/>
</dbReference>
<dbReference type="SMR" id="C0Q2N7"/>
<dbReference type="GeneID" id="98390858"/>
<dbReference type="KEGG" id="sei:SPC_3955"/>
<dbReference type="HOGENOM" id="CLU_148047_1_0_6"/>
<dbReference type="Proteomes" id="UP000001599">
    <property type="component" value="Chromosome"/>
</dbReference>
<dbReference type="GO" id="GO:0005886">
    <property type="term" value="C:plasma membrane"/>
    <property type="evidence" value="ECO:0007669"/>
    <property type="project" value="UniProtKB-SubCell"/>
</dbReference>
<dbReference type="GO" id="GO:0045259">
    <property type="term" value="C:proton-transporting ATP synthase complex"/>
    <property type="evidence" value="ECO:0007669"/>
    <property type="project" value="UniProtKB-KW"/>
</dbReference>
<dbReference type="GO" id="GO:0033177">
    <property type="term" value="C:proton-transporting two-sector ATPase complex, proton-transporting domain"/>
    <property type="evidence" value="ECO:0007669"/>
    <property type="project" value="InterPro"/>
</dbReference>
<dbReference type="GO" id="GO:0008289">
    <property type="term" value="F:lipid binding"/>
    <property type="evidence" value="ECO:0007669"/>
    <property type="project" value="UniProtKB-KW"/>
</dbReference>
<dbReference type="GO" id="GO:0046933">
    <property type="term" value="F:proton-transporting ATP synthase activity, rotational mechanism"/>
    <property type="evidence" value="ECO:0007669"/>
    <property type="project" value="UniProtKB-UniRule"/>
</dbReference>
<dbReference type="CDD" id="cd18185">
    <property type="entry name" value="ATP-synt_Fo_c_ATPE"/>
    <property type="match status" value="1"/>
</dbReference>
<dbReference type="FunFam" id="1.20.20.10:FF:000002">
    <property type="entry name" value="ATP synthase subunit c"/>
    <property type="match status" value="1"/>
</dbReference>
<dbReference type="Gene3D" id="1.20.20.10">
    <property type="entry name" value="F1F0 ATP synthase subunit C"/>
    <property type="match status" value="1"/>
</dbReference>
<dbReference type="HAMAP" id="MF_01396">
    <property type="entry name" value="ATP_synth_c_bact"/>
    <property type="match status" value="1"/>
</dbReference>
<dbReference type="InterPro" id="IPR005953">
    <property type="entry name" value="ATP_synth_csu_bac/chlpt"/>
</dbReference>
<dbReference type="InterPro" id="IPR000454">
    <property type="entry name" value="ATP_synth_F0_csu"/>
</dbReference>
<dbReference type="InterPro" id="IPR020537">
    <property type="entry name" value="ATP_synth_F0_csu_DDCD_BS"/>
</dbReference>
<dbReference type="InterPro" id="IPR038662">
    <property type="entry name" value="ATP_synth_F0_csu_sf"/>
</dbReference>
<dbReference type="InterPro" id="IPR002379">
    <property type="entry name" value="ATPase_proteolipid_c-like_dom"/>
</dbReference>
<dbReference type="InterPro" id="IPR035921">
    <property type="entry name" value="F/V-ATP_Csub_sf"/>
</dbReference>
<dbReference type="NCBIfam" id="TIGR01260">
    <property type="entry name" value="ATP_synt_c"/>
    <property type="match status" value="1"/>
</dbReference>
<dbReference type="NCBIfam" id="NF005363">
    <property type="entry name" value="PRK06876.1"/>
    <property type="match status" value="1"/>
</dbReference>
<dbReference type="Pfam" id="PF00137">
    <property type="entry name" value="ATP-synt_C"/>
    <property type="match status" value="1"/>
</dbReference>
<dbReference type="PRINTS" id="PR00124">
    <property type="entry name" value="ATPASEC"/>
</dbReference>
<dbReference type="SUPFAM" id="SSF81333">
    <property type="entry name" value="F1F0 ATP synthase subunit C"/>
    <property type="match status" value="1"/>
</dbReference>
<dbReference type="PROSITE" id="PS00605">
    <property type="entry name" value="ATPASE_C"/>
    <property type="match status" value="1"/>
</dbReference>
<keyword id="KW-0066">ATP synthesis</keyword>
<keyword id="KW-0997">Cell inner membrane</keyword>
<keyword id="KW-1003">Cell membrane</keyword>
<keyword id="KW-0138">CF(0)</keyword>
<keyword id="KW-0375">Hydrogen ion transport</keyword>
<keyword id="KW-0406">Ion transport</keyword>
<keyword id="KW-0446">Lipid-binding</keyword>
<keyword id="KW-0472">Membrane</keyword>
<keyword id="KW-0812">Transmembrane</keyword>
<keyword id="KW-1133">Transmembrane helix</keyword>
<keyword id="KW-0813">Transport</keyword>
<reference key="1">
    <citation type="journal article" date="2009" name="PLoS ONE">
        <title>Salmonella paratyphi C: genetic divergence from Salmonella choleraesuis and pathogenic convergence with Salmonella typhi.</title>
        <authorList>
            <person name="Liu W.-Q."/>
            <person name="Feng Y."/>
            <person name="Wang Y."/>
            <person name="Zou Q.-H."/>
            <person name="Chen F."/>
            <person name="Guo J.-T."/>
            <person name="Peng Y.-H."/>
            <person name="Jin Y."/>
            <person name="Li Y.-G."/>
            <person name="Hu S.-N."/>
            <person name="Johnston R.N."/>
            <person name="Liu G.-R."/>
            <person name="Liu S.-L."/>
        </authorList>
    </citation>
    <scope>NUCLEOTIDE SEQUENCE [LARGE SCALE GENOMIC DNA]</scope>
    <source>
        <strain>RKS4594</strain>
    </source>
</reference>
<comment type="function">
    <text evidence="1">F(1)F(0) ATP synthase produces ATP from ADP in the presence of a proton or sodium gradient. F-type ATPases consist of two structural domains, F(1) containing the extramembraneous catalytic core and F(0) containing the membrane proton channel, linked together by a central stalk and a peripheral stalk. During catalysis, ATP synthesis in the catalytic domain of F(1) is coupled via a rotary mechanism of the central stalk subunits to proton translocation.</text>
</comment>
<comment type="function">
    <text evidence="1">Key component of the F(0) channel; it plays a direct role in translocation across the membrane. A homomeric c-ring of between 10-14 subunits forms the central stalk rotor element with the F(1) delta and epsilon subunits.</text>
</comment>
<comment type="subunit">
    <text evidence="1">F-type ATPases have 2 components, F(1) - the catalytic core - and F(0) - the membrane proton channel. F(1) has five subunits: alpha(3), beta(3), gamma(1), delta(1), epsilon(1). F(0) has three main subunits: a(1), b(2) and c(10-14). The alpha and beta chains form an alternating ring which encloses part of the gamma chain. F(1) is attached to F(0) by a central stalk formed by the gamma and epsilon chains, while a peripheral stalk is formed by the delta and b chains.</text>
</comment>
<comment type="subcellular location">
    <subcellularLocation>
        <location evidence="1">Cell inner membrane</location>
        <topology evidence="1">Multi-pass membrane protein</topology>
    </subcellularLocation>
</comment>
<comment type="similarity">
    <text evidence="1">Belongs to the ATPase C chain family.</text>
</comment>
<evidence type="ECO:0000255" key="1">
    <source>
        <dbReference type="HAMAP-Rule" id="MF_01396"/>
    </source>
</evidence>
<name>ATPL_SALPC</name>
<feature type="chain" id="PRO_1000184463" description="ATP synthase subunit c">
    <location>
        <begin position="1"/>
        <end position="79"/>
    </location>
</feature>
<feature type="transmembrane region" description="Helical" evidence="1">
    <location>
        <begin position="11"/>
        <end position="31"/>
    </location>
</feature>
<feature type="transmembrane region" description="Helical" evidence="1">
    <location>
        <begin position="53"/>
        <end position="73"/>
    </location>
</feature>
<feature type="site" description="Reversibly protonated during proton transport" evidence="1">
    <location>
        <position position="61"/>
    </location>
</feature>
<organism>
    <name type="scientific">Salmonella paratyphi C (strain RKS4594)</name>
    <dbReference type="NCBI Taxonomy" id="476213"/>
    <lineage>
        <taxon>Bacteria</taxon>
        <taxon>Pseudomonadati</taxon>
        <taxon>Pseudomonadota</taxon>
        <taxon>Gammaproteobacteria</taxon>
        <taxon>Enterobacterales</taxon>
        <taxon>Enterobacteriaceae</taxon>
        <taxon>Salmonella</taxon>
    </lineage>
</organism>